<comment type="function">
    <text evidence="1">Nucleotidase that shows phosphatase activity on nucleoside 5'-monophosphates.</text>
</comment>
<comment type="catalytic activity">
    <reaction evidence="1">
        <text>a ribonucleoside 5'-phosphate + H2O = a ribonucleoside + phosphate</text>
        <dbReference type="Rhea" id="RHEA:12484"/>
        <dbReference type="ChEBI" id="CHEBI:15377"/>
        <dbReference type="ChEBI" id="CHEBI:18254"/>
        <dbReference type="ChEBI" id="CHEBI:43474"/>
        <dbReference type="ChEBI" id="CHEBI:58043"/>
        <dbReference type="EC" id="3.1.3.5"/>
    </reaction>
</comment>
<comment type="cofactor">
    <cofactor evidence="1">
        <name>a divalent metal cation</name>
        <dbReference type="ChEBI" id="CHEBI:60240"/>
    </cofactor>
    <text evidence="1">Binds 1 divalent metal cation per subunit.</text>
</comment>
<comment type="subcellular location">
    <subcellularLocation>
        <location evidence="1">Cytoplasm</location>
    </subcellularLocation>
</comment>
<comment type="similarity">
    <text evidence="1">Belongs to the SurE nucleotidase family.</text>
</comment>
<feature type="chain" id="PRO_1000007789" description="5'-nucleotidase SurE">
    <location>
        <begin position="1"/>
        <end position="260"/>
    </location>
</feature>
<feature type="binding site" evidence="1">
    <location>
        <position position="8"/>
    </location>
    <ligand>
        <name>a divalent metal cation</name>
        <dbReference type="ChEBI" id="CHEBI:60240"/>
    </ligand>
</feature>
<feature type="binding site" evidence="1">
    <location>
        <position position="9"/>
    </location>
    <ligand>
        <name>a divalent metal cation</name>
        <dbReference type="ChEBI" id="CHEBI:60240"/>
    </ligand>
</feature>
<feature type="binding site" evidence="1">
    <location>
        <position position="43"/>
    </location>
    <ligand>
        <name>a divalent metal cation</name>
        <dbReference type="ChEBI" id="CHEBI:60240"/>
    </ligand>
</feature>
<feature type="binding site" evidence="1">
    <location>
        <position position="96"/>
    </location>
    <ligand>
        <name>a divalent metal cation</name>
        <dbReference type="ChEBI" id="CHEBI:60240"/>
    </ligand>
</feature>
<dbReference type="EC" id="3.1.3.5" evidence="1"/>
<dbReference type="EMBL" id="CP000377">
    <property type="protein sequence ID" value="ABF64524.1"/>
    <property type="molecule type" value="Genomic_DNA"/>
</dbReference>
<dbReference type="RefSeq" id="WP_011539119.1">
    <property type="nucleotide sequence ID" value="NC_008044.1"/>
</dbReference>
<dbReference type="SMR" id="Q1GFP2"/>
<dbReference type="STRING" id="292414.TM1040_1791"/>
<dbReference type="KEGG" id="sit:TM1040_1791"/>
<dbReference type="eggNOG" id="COG0496">
    <property type="taxonomic scope" value="Bacteria"/>
</dbReference>
<dbReference type="HOGENOM" id="CLU_045192_1_2_5"/>
<dbReference type="OrthoDB" id="9780815at2"/>
<dbReference type="Proteomes" id="UP000000636">
    <property type="component" value="Chromosome"/>
</dbReference>
<dbReference type="GO" id="GO:0005737">
    <property type="term" value="C:cytoplasm"/>
    <property type="evidence" value="ECO:0007669"/>
    <property type="project" value="UniProtKB-SubCell"/>
</dbReference>
<dbReference type="GO" id="GO:0008254">
    <property type="term" value="F:3'-nucleotidase activity"/>
    <property type="evidence" value="ECO:0007669"/>
    <property type="project" value="TreeGrafter"/>
</dbReference>
<dbReference type="GO" id="GO:0008253">
    <property type="term" value="F:5'-nucleotidase activity"/>
    <property type="evidence" value="ECO:0007669"/>
    <property type="project" value="UniProtKB-UniRule"/>
</dbReference>
<dbReference type="GO" id="GO:0004309">
    <property type="term" value="F:exopolyphosphatase activity"/>
    <property type="evidence" value="ECO:0007669"/>
    <property type="project" value="TreeGrafter"/>
</dbReference>
<dbReference type="GO" id="GO:0046872">
    <property type="term" value="F:metal ion binding"/>
    <property type="evidence" value="ECO:0007669"/>
    <property type="project" value="UniProtKB-UniRule"/>
</dbReference>
<dbReference type="GO" id="GO:0000166">
    <property type="term" value="F:nucleotide binding"/>
    <property type="evidence" value="ECO:0007669"/>
    <property type="project" value="UniProtKB-KW"/>
</dbReference>
<dbReference type="Gene3D" id="3.40.1210.10">
    <property type="entry name" value="Survival protein SurE-like phosphatase/nucleotidase"/>
    <property type="match status" value="1"/>
</dbReference>
<dbReference type="HAMAP" id="MF_00060">
    <property type="entry name" value="SurE"/>
    <property type="match status" value="1"/>
</dbReference>
<dbReference type="InterPro" id="IPR030048">
    <property type="entry name" value="SurE"/>
</dbReference>
<dbReference type="InterPro" id="IPR002828">
    <property type="entry name" value="SurE-like_Pase/nucleotidase"/>
</dbReference>
<dbReference type="InterPro" id="IPR036523">
    <property type="entry name" value="SurE-like_sf"/>
</dbReference>
<dbReference type="NCBIfam" id="NF001490">
    <property type="entry name" value="PRK00346.1-4"/>
    <property type="match status" value="1"/>
</dbReference>
<dbReference type="NCBIfam" id="NF010541">
    <property type="entry name" value="PRK13931.1"/>
    <property type="match status" value="1"/>
</dbReference>
<dbReference type="NCBIfam" id="TIGR00087">
    <property type="entry name" value="surE"/>
    <property type="match status" value="1"/>
</dbReference>
<dbReference type="PANTHER" id="PTHR30457">
    <property type="entry name" value="5'-NUCLEOTIDASE SURE"/>
    <property type="match status" value="1"/>
</dbReference>
<dbReference type="PANTHER" id="PTHR30457:SF12">
    <property type="entry name" value="5'_3'-NUCLEOTIDASE SURE"/>
    <property type="match status" value="1"/>
</dbReference>
<dbReference type="Pfam" id="PF01975">
    <property type="entry name" value="SurE"/>
    <property type="match status" value="1"/>
</dbReference>
<dbReference type="SUPFAM" id="SSF64167">
    <property type="entry name" value="SurE-like"/>
    <property type="match status" value="1"/>
</dbReference>
<organism>
    <name type="scientific">Ruegeria sp. (strain TM1040)</name>
    <name type="common">Silicibacter sp.</name>
    <dbReference type="NCBI Taxonomy" id="292414"/>
    <lineage>
        <taxon>Bacteria</taxon>
        <taxon>Pseudomonadati</taxon>
        <taxon>Pseudomonadota</taxon>
        <taxon>Alphaproteobacteria</taxon>
        <taxon>Rhodobacterales</taxon>
        <taxon>Roseobacteraceae</taxon>
        <taxon>Ruegeria</taxon>
    </lineage>
</organism>
<name>SURE_RUEST</name>
<keyword id="KW-0963">Cytoplasm</keyword>
<keyword id="KW-0378">Hydrolase</keyword>
<keyword id="KW-0479">Metal-binding</keyword>
<keyword id="KW-0547">Nucleotide-binding</keyword>
<keyword id="KW-1185">Reference proteome</keyword>
<reference key="1">
    <citation type="submission" date="2006-05" db="EMBL/GenBank/DDBJ databases">
        <title>Complete sequence of chromosome of Silicibacter sp. TM1040.</title>
        <authorList>
            <consortium name="US DOE Joint Genome Institute"/>
            <person name="Copeland A."/>
            <person name="Lucas S."/>
            <person name="Lapidus A."/>
            <person name="Barry K."/>
            <person name="Detter J.C."/>
            <person name="Glavina del Rio T."/>
            <person name="Hammon N."/>
            <person name="Israni S."/>
            <person name="Dalin E."/>
            <person name="Tice H."/>
            <person name="Pitluck S."/>
            <person name="Brettin T."/>
            <person name="Bruce D."/>
            <person name="Han C."/>
            <person name="Tapia R."/>
            <person name="Goodwin L."/>
            <person name="Thompson L.S."/>
            <person name="Gilna P."/>
            <person name="Schmutz J."/>
            <person name="Larimer F."/>
            <person name="Land M."/>
            <person name="Hauser L."/>
            <person name="Kyrpides N."/>
            <person name="Kim E."/>
            <person name="Belas R."/>
            <person name="Moran M.A."/>
            <person name="Buchan A."/>
            <person name="Gonzalez J.M."/>
            <person name="Schell M.A."/>
            <person name="Sun F."/>
            <person name="Richardson P."/>
        </authorList>
    </citation>
    <scope>NUCLEOTIDE SEQUENCE [LARGE SCALE GENOMIC DNA]</scope>
    <source>
        <strain>TM1040</strain>
    </source>
</reference>
<sequence>MRILVTNDDGISAPGLAVLEQIATELAGPEGEVWIVAPAFEQSGVGHCISYTHPSILSELGPRRFAAEGSPADCVLAALHVVMKDTPPDLILSGVNRGNNSAENALYSGTLGGAMEGALQGVPAMALSQYYGSGNRDLENPFEAARAHGAEVVRKLLSATPQNDSPYRLFYNINFPPVAAGDVKGIKVTTQGCRSGKRFSAEEQFSPNGKRFIWVKGGDQQVSTAPETDAAANLDGFISVTPMRADLTAHDAVEALKAIE</sequence>
<gene>
    <name evidence="1" type="primary">surE</name>
    <name type="ordered locus">TM1040_1791</name>
</gene>
<accession>Q1GFP2</accession>
<protein>
    <recommendedName>
        <fullName evidence="1">5'-nucleotidase SurE</fullName>
        <ecNumber evidence="1">3.1.3.5</ecNumber>
    </recommendedName>
    <alternativeName>
        <fullName evidence="1">Nucleoside 5'-monophosphate phosphohydrolase</fullName>
    </alternativeName>
</protein>
<proteinExistence type="inferred from homology"/>
<evidence type="ECO:0000255" key="1">
    <source>
        <dbReference type="HAMAP-Rule" id="MF_00060"/>
    </source>
</evidence>